<sequence>MAQEVIKIRGGRTLNGEVNISGAKNSAVAIIPATLLAQGHVKLEGLPQISDVKTLVSLLEDLNIKASLNGTELEVDTTEIQNAALPNNKVESLRASYYMMGAMLGRFKKCVIGLPGGCPLGPRPIDQHIKGFKALGAEIDESSTTSMKIEAKELKGAHIFLDMVSVGATINIMLAAVYATGQTVIENAAKEPEVVDVANFLTSMGANIKGAGTSTIKINGVKELHGSEYQVIPDRIEAGTYMCIAAACGENVILNNIVPKHVETLTAKFSELGVNVDVRDERIRINNNAPYRFVDIKTLVYPGFATDLQQPITPLLFMANGPSFVTDTIYPERFKHVEELKRMGANIEVDEGTATIKPSTLHGAEVYASDLRAGACLIIAGLIAEGVTTIYNVKHIYRGYTDIVEHLKALGADIWTETV</sequence>
<keyword id="KW-0131">Cell cycle</keyword>
<keyword id="KW-0132">Cell division</keyword>
<keyword id="KW-0133">Cell shape</keyword>
<keyword id="KW-0961">Cell wall biogenesis/degradation</keyword>
<keyword id="KW-0963">Cytoplasm</keyword>
<keyword id="KW-0573">Peptidoglycan synthesis</keyword>
<keyword id="KW-0670">Pyruvate</keyword>
<keyword id="KW-0808">Transferase</keyword>
<gene>
    <name evidence="1" type="primary">murA2</name>
    <name type="synonym">murZ</name>
    <name type="ordered locus">SAR2212</name>
</gene>
<name>MURA2_STAAR</name>
<reference key="1">
    <citation type="journal article" date="2004" name="Proc. Natl. Acad. Sci. U.S.A.">
        <title>Complete genomes of two clinical Staphylococcus aureus strains: evidence for the rapid evolution of virulence and drug resistance.</title>
        <authorList>
            <person name="Holden M.T.G."/>
            <person name="Feil E.J."/>
            <person name="Lindsay J.A."/>
            <person name="Peacock S.J."/>
            <person name="Day N.P.J."/>
            <person name="Enright M.C."/>
            <person name="Foster T.J."/>
            <person name="Moore C.E."/>
            <person name="Hurst L."/>
            <person name="Atkin R."/>
            <person name="Barron A."/>
            <person name="Bason N."/>
            <person name="Bentley S.D."/>
            <person name="Chillingworth C."/>
            <person name="Chillingworth T."/>
            <person name="Churcher C."/>
            <person name="Clark L."/>
            <person name="Corton C."/>
            <person name="Cronin A."/>
            <person name="Doggett J."/>
            <person name="Dowd L."/>
            <person name="Feltwell T."/>
            <person name="Hance Z."/>
            <person name="Harris B."/>
            <person name="Hauser H."/>
            <person name="Holroyd S."/>
            <person name="Jagels K."/>
            <person name="James K.D."/>
            <person name="Lennard N."/>
            <person name="Line A."/>
            <person name="Mayes R."/>
            <person name="Moule S."/>
            <person name="Mungall K."/>
            <person name="Ormond D."/>
            <person name="Quail M.A."/>
            <person name="Rabbinowitsch E."/>
            <person name="Rutherford K.M."/>
            <person name="Sanders M."/>
            <person name="Sharp S."/>
            <person name="Simmonds M."/>
            <person name="Stevens K."/>
            <person name="Whitehead S."/>
            <person name="Barrell B.G."/>
            <person name="Spratt B.G."/>
            <person name="Parkhill J."/>
        </authorList>
    </citation>
    <scope>NUCLEOTIDE SEQUENCE [LARGE SCALE GENOMIC DNA]</scope>
    <source>
        <strain>MRSA252</strain>
    </source>
</reference>
<organism>
    <name type="scientific">Staphylococcus aureus (strain MRSA252)</name>
    <dbReference type="NCBI Taxonomy" id="282458"/>
    <lineage>
        <taxon>Bacteria</taxon>
        <taxon>Bacillati</taxon>
        <taxon>Bacillota</taxon>
        <taxon>Bacilli</taxon>
        <taxon>Bacillales</taxon>
        <taxon>Staphylococcaceae</taxon>
        <taxon>Staphylococcus</taxon>
    </lineage>
</organism>
<feature type="chain" id="PRO_0000178921" description="UDP-N-acetylglucosamine 1-carboxyvinyltransferase 2">
    <location>
        <begin position="1"/>
        <end position="419"/>
    </location>
</feature>
<feature type="active site" description="Proton donor" evidence="1">
    <location>
        <position position="118"/>
    </location>
</feature>
<feature type="binding site" evidence="1">
    <location>
        <begin position="24"/>
        <end position="25"/>
    </location>
    <ligand>
        <name>phosphoenolpyruvate</name>
        <dbReference type="ChEBI" id="CHEBI:58702"/>
    </ligand>
</feature>
<feature type="binding site" evidence="1">
    <location>
        <position position="94"/>
    </location>
    <ligand>
        <name>UDP-N-acetyl-alpha-D-glucosamine</name>
        <dbReference type="ChEBI" id="CHEBI:57705"/>
    </ligand>
</feature>
<feature type="binding site" evidence="1">
    <location>
        <begin position="123"/>
        <end position="127"/>
    </location>
    <ligand>
        <name>UDP-N-acetyl-alpha-D-glucosamine</name>
        <dbReference type="ChEBI" id="CHEBI:57705"/>
    </ligand>
</feature>
<feature type="binding site" evidence="1">
    <location>
        <position position="307"/>
    </location>
    <ligand>
        <name>UDP-N-acetyl-alpha-D-glucosamine</name>
        <dbReference type="ChEBI" id="CHEBI:57705"/>
    </ligand>
</feature>
<feature type="binding site" evidence="1">
    <location>
        <position position="329"/>
    </location>
    <ligand>
        <name>UDP-N-acetyl-alpha-D-glucosamine</name>
        <dbReference type="ChEBI" id="CHEBI:57705"/>
    </ligand>
</feature>
<feature type="modified residue" description="2-(S-cysteinyl)pyruvic acid O-phosphothioketal" evidence="1">
    <location>
        <position position="118"/>
    </location>
</feature>
<comment type="function">
    <text evidence="1">Cell wall formation. Adds enolpyruvyl to UDP-N-acetylglucosamine.</text>
</comment>
<comment type="catalytic activity">
    <reaction evidence="1">
        <text>phosphoenolpyruvate + UDP-N-acetyl-alpha-D-glucosamine = UDP-N-acetyl-3-O-(1-carboxyvinyl)-alpha-D-glucosamine + phosphate</text>
        <dbReference type="Rhea" id="RHEA:18681"/>
        <dbReference type="ChEBI" id="CHEBI:43474"/>
        <dbReference type="ChEBI" id="CHEBI:57705"/>
        <dbReference type="ChEBI" id="CHEBI:58702"/>
        <dbReference type="ChEBI" id="CHEBI:68483"/>
        <dbReference type="EC" id="2.5.1.7"/>
    </reaction>
</comment>
<comment type="pathway">
    <text evidence="1">Cell wall biogenesis; peptidoglycan biosynthesis.</text>
</comment>
<comment type="subcellular location">
    <subcellularLocation>
        <location evidence="1">Cytoplasm</location>
    </subcellularLocation>
</comment>
<comment type="similarity">
    <text evidence="1">Belongs to the EPSP synthase family. MurA subfamily.</text>
</comment>
<evidence type="ECO:0000255" key="1">
    <source>
        <dbReference type="HAMAP-Rule" id="MF_00111"/>
    </source>
</evidence>
<accession>Q6GEV1</accession>
<protein>
    <recommendedName>
        <fullName evidence="1">UDP-N-acetylglucosamine 1-carboxyvinyltransferase 2</fullName>
        <ecNumber evidence="1">2.5.1.7</ecNumber>
    </recommendedName>
    <alternativeName>
        <fullName evidence="1">Enoylpyruvate transferase 2</fullName>
    </alternativeName>
    <alternativeName>
        <fullName evidence="1">UDP-N-acetylglucosamine enolpyruvyl transferase 2</fullName>
        <shortName evidence="1">EPT 2</shortName>
    </alternativeName>
</protein>
<dbReference type="EC" id="2.5.1.7" evidence="1"/>
<dbReference type="EMBL" id="BX571856">
    <property type="protein sequence ID" value="CAG41193.1"/>
    <property type="molecule type" value="Genomic_DNA"/>
</dbReference>
<dbReference type="RefSeq" id="WP_000046606.1">
    <property type="nucleotide sequence ID" value="NC_002952.2"/>
</dbReference>
<dbReference type="SMR" id="Q6GEV1"/>
<dbReference type="KEGG" id="sar:SAR2212"/>
<dbReference type="HOGENOM" id="CLU_027387_0_0_9"/>
<dbReference type="UniPathway" id="UPA00219"/>
<dbReference type="Proteomes" id="UP000000596">
    <property type="component" value="Chromosome"/>
</dbReference>
<dbReference type="GO" id="GO:0005737">
    <property type="term" value="C:cytoplasm"/>
    <property type="evidence" value="ECO:0007669"/>
    <property type="project" value="UniProtKB-SubCell"/>
</dbReference>
<dbReference type="GO" id="GO:0008760">
    <property type="term" value="F:UDP-N-acetylglucosamine 1-carboxyvinyltransferase activity"/>
    <property type="evidence" value="ECO:0007669"/>
    <property type="project" value="UniProtKB-UniRule"/>
</dbReference>
<dbReference type="GO" id="GO:0051301">
    <property type="term" value="P:cell division"/>
    <property type="evidence" value="ECO:0007669"/>
    <property type="project" value="UniProtKB-KW"/>
</dbReference>
<dbReference type="GO" id="GO:0071555">
    <property type="term" value="P:cell wall organization"/>
    <property type="evidence" value="ECO:0007669"/>
    <property type="project" value="UniProtKB-KW"/>
</dbReference>
<dbReference type="GO" id="GO:0009252">
    <property type="term" value="P:peptidoglycan biosynthetic process"/>
    <property type="evidence" value="ECO:0007669"/>
    <property type="project" value="UniProtKB-UniRule"/>
</dbReference>
<dbReference type="GO" id="GO:0008360">
    <property type="term" value="P:regulation of cell shape"/>
    <property type="evidence" value="ECO:0007669"/>
    <property type="project" value="UniProtKB-KW"/>
</dbReference>
<dbReference type="GO" id="GO:0019277">
    <property type="term" value="P:UDP-N-acetylgalactosamine biosynthetic process"/>
    <property type="evidence" value="ECO:0007669"/>
    <property type="project" value="InterPro"/>
</dbReference>
<dbReference type="CDD" id="cd01555">
    <property type="entry name" value="UdpNAET"/>
    <property type="match status" value="1"/>
</dbReference>
<dbReference type="FunFam" id="3.65.10.10:FF:000001">
    <property type="entry name" value="UDP-N-acetylglucosamine 1-carboxyvinyltransferase"/>
    <property type="match status" value="1"/>
</dbReference>
<dbReference type="Gene3D" id="3.65.10.10">
    <property type="entry name" value="Enolpyruvate transferase domain"/>
    <property type="match status" value="2"/>
</dbReference>
<dbReference type="HAMAP" id="MF_00111">
    <property type="entry name" value="MurA"/>
    <property type="match status" value="1"/>
</dbReference>
<dbReference type="InterPro" id="IPR001986">
    <property type="entry name" value="Enolpyruvate_Tfrase_dom"/>
</dbReference>
<dbReference type="InterPro" id="IPR036968">
    <property type="entry name" value="Enolpyruvate_Tfrase_sf"/>
</dbReference>
<dbReference type="InterPro" id="IPR050068">
    <property type="entry name" value="MurA_subfamily"/>
</dbReference>
<dbReference type="InterPro" id="IPR013792">
    <property type="entry name" value="RNA3'P_cycl/enolpyr_Trfase_a/b"/>
</dbReference>
<dbReference type="InterPro" id="IPR005750">
    <property type="entry name" value="UDP_GlcNAc_COvinyl_MurA"/>
</dbReference>
<dbReference type="NCBIfam" id="TIGR01072">
    <property type="entry name" value="murA"/>
    <property type="match status" value="1"/>
</dbReference>
<dbReference type="NCBIfam" id="NF006873">
    <property type="entry name" value="PRK09369.1"/>
    <property type="match status" value="1"/>
</dbReference>
<dbReference type="NCBIfam" id="NF009470">
    <property type="entry name" value="PRK12830.1"/>
    <property type="match status" value="1"/>
</dbReference>
<dbReference type="PANTHER" id="PTHR43783">
    <property type="entry name" value="UDP-N-ACETYLGLUCOSAMINE 1-CARBOXYVINYLTRANSFERASE"/>
    <property type="match status" value="1"/>
</dbReference>
<dbReference type="PANTHER" id="PTHR43783:SF2">
    <property type="entry name" value="UDP-N-ACETYLGLUCOSAMINE 1-CARBOXYVINYLTRANSFERASE 2"/>
    <property type="match status" value="1"/>
</dbReference>
<dbReference type="Pfam" id="PF00275">
    <property type="entry name" value="EPSP_synthase"/>
    <property type="match status" value="1"/>
</dbReference>
<dbReference type="SUPFAM" id="SSF55205">
    <property type="entry name" value="EPT/RTPC-like"/>
    <property type="match status" value="1"/>
</dbReference>
<proteinExistence type="inferred from homology"/>